<reference key="1">
    <citation type="journal article" date="2004" name="Nucleic Acids Res.">
        <title>Whole genome comparisons of serotype 4b and 1/2a strains of the food-borne pathogen Listeria monocytogenes reveal new insights into the core genome components of this species.</title>
        <authorList>
            <person name="Nelson K.E."/>
            <person name="Fouts D.E."/>
            <person name="Mongodin E.F."/>
            <person name="Ravel J."/>
            <person name="DeBoy R.T."/>
            <person name="Kolonay J.F."/>
            <person name="Rasko D.A."/>
            <person name="Angiuoli S.V."/>
            <person name="Gill S.R."/>
            <person name="Paulsen I.T."/>
            <person name="Peterson J.D."/>
            <person name="White O."/>
            <person name="Nelson W.C."/>
            <person name="Nierman W.C."/>
            <person name="Beanan M.J."/>
            <person name="Brinkac L.M."/>
            <person name="Daugherty S.C."/>
            <person name="Dodson R.J."/>
            <person name="Durkin A.S."/>
            <person name="Madupu R."/>
            <person name="Haft D.H."/>
            <person name="Selengut J."/>
            <person name="Van Aken S.E."/>
            <person name="Khouri H.M."/>
            <person name="Fedorova N."/>
            <person name="Forberger H.A."/>
            <person name="Tran B."/>
            <person name="Kathariou S."/>
            <person name="Wonderling L.D."/>
            <person name="Uhlich G.A."/>
            <person name="Bayles D.O."/>
            <person name="Luchansky J.B."/>
            <person name="Fraser C.M."/>
        </authorList>
    </citation>
    <scope>NUCLEOTIDE SEQUENCE [LARGE SCALE GENOMIC DNA]</scope>
    <source>
        <strain>F2365</strain>
    </source>
</reference>
<proteinExistence type="inferred from homology"/>
<feature type="initiator methionine" description="Removed" evidence="1">
    <location>
        <position position="1"/>
    </location>
</feature>
<feature type="chain" id="PRO_0000177376" description="Large ribosomal subunit protein bL35">
    <location>
        <begin position="2"/>
        <end position="66"/>
    </location>
</feature>
<feature type="region of interest" description="Disordered" evidence="3">
    <location>
        <begin position="1"/>
        <end position="50"/>
    </location>
</feature>
<feature type="compositionally biased region" description="Basic residues" evidence="3">
    <location>
        <begin position="1"/>
        <end position="28"/>
    </location>
</feature>
<accession>Q71YN4</accession>
<sequence length="66" mass="7720">MPKMKTHRGSAKRFKRTGSGKLKRRHGFTSHMFANKSQKQKRKLRKSAMVSAGDFKRIRQMVAKMK</sequence>
<dbReference type="EMBL" id="AE017262">
    <property type="protein sequence ID" value="AAT04580.1"/>
    <property type="molecule type" value="Genomic_DNA"/>
</dbReference>
<dbReference type="RefSeq" id="WP_003720098.1">
    <property type="nucleotide sequence ID" value="NC_002973.6"/>
</dbReference>
<dbReference type="SMR" id="Q71YN4"/>
<dbReference type="GeneID" id="93239693"/>
<dbReference type="KEGG" id="lmf:LMOf2365_1809"/>
<dbReference type="HOGENOM" id="CLU_169643_3_0_9"/>
<dbReference type="GO" id="GO:0022625">
    <property type="term" value="C:cytosolic large ribosomal subunit"/>
    <property type="evidence" value="ECO:0007669"/>
    <property type="project" value="TreeGrafter"/>
</dbReference>
<dbReference type="GO" id="GO:0003735">
    <property type="term" value="F:structural constituent of ribosome"/>
    <property type="evidence" value="ECO:0007669"/>
    <property type="project" value="InterPro"/>
</dbReference>
<dbReference type="GO" id="GO:0006412">
    <property type="term" value="P:translation"/>
    <property type="evidence" value="ECO:0007669"/>
    <property type="project" value="UniProtKB-UniRule"/>
</dbReference>
<dbReference type="FunFam" id="4.10.410.60:FF:000001">
    <property type="entry name" value="50S ribosomal protein L35"/>
    <property type="match status" value="1"/>
</dbReference>
<dbReference type="Gene3D" id="4.10.410.60">
    <property type="match status" value="1"/>
</dbReference>
<dbReference type="HAMAP" id="MF_00514">
    <property type="entry name" value="Ribosomal_bL35"/>
    <property type="match status" value="1"/>
</dbReference>
<dbReference type="InterPro" id="IPR001706">
    <property type="entry name" value="Ribosomal_bL35"/>
</dbReference>
<dbReference type="InterPro" id="IPR021137">
    <property type="entry name" value="Ribosomal_bL35-like"/>
</dbReference>
<dbReference type="InterPro" id="IPR018265">
    <property type="entry name" value="Ribosomal_bL35_CS"/>
</dbReference>
<dbReference type="InterPro" id="IPR037229">
    <property type="entry name" value="Ribosomal_bL35_sf"/>
</dbReference>
<dbReference type="NCBIfam" id="TIGR00001">
    <property type="entry name" value="rpmI_bact"/>
    <property type="match status" value="1"/>
</dbReference>
<dbReference type="PANTHER" id="PTHR33343">
    <property type="entry name" value="54S RIBOSOMAL PROTEIN BL35M"/>
    <property type="match status" value="1"/>
</dbReference>
<dbReference type="PANTHER" id="PTHR33343:SF1">
    <property type="entry name" value="LARGE RIBOSOMAL SUBUNIT PROTEIN BL35M"/>
    <property type="match status" value="1"/>
</dbReference>
<dbReference type="Pfam" id="PF01632">
    <property type="entry name" value="Ribosomal_L35p"/>
    <property type="match status" value="1"/>
</dbReference>
<dbReference type="PRINTS" id="PR00064">
    <property type="entry name" value="RIBOSOMALL35"/>
</dbReference>
<dbReference type="SUPFAM" id="SSF143034">
    <property type="entry name" value="L35p-like"/>
    <property type="match status" value="1"/>
</dbReference>
<dbReference type="PROSITE" id="PS00936">
    <property type="entry name" value="RIBOSOMAL_L35"/>
    <property type="match status" value="1"/>
</dbReference>
<comment type="similarity">
    <text evidence="2">Belongs to the bacterial ribosomal protein bL35 family.</text>
</comment>
<protein>
    <recommendedName>
        <fullName evidence="2">Large ribosomal subunit protein bL35</fullName>
    </recommendedName>
    <alternativeName>
        <fullName evidence="4">50S ribosomal protein L35</fullName>
    </alternativeName>
</protein>
<gene>
    <name evidence="2" type="primary">rpmI</name>
    <name type="ordered locus">LMOf2365_1809</name>
</gene>
<organism>
    <name type="scientific">Listeria monocytogenes serotype 4b (strain F2365)</name>
    <dbReference type="NCBI Taxonomy" id="265669"/>
    <lineage>
        <taxon>Bacteria</taxon>
        <taxon>Bacillati</taxon>
        <taxon>Bacillota</taxon>
        <taxon>Bacilli</taxon>
        <taxon>Bacillales</taxon>
        <taxon>Listeriaceae</taxon>
        <taxon>Listeria</taxon>
    </lineage>
</organism>
<keyword id="KW-0687">Ribonucleoprotein</keyword>
<keyword id="KW-0689">Ribosomal protein</keyword>
<name>RL35_LISMF</name>
<evidence type="ECO:0000250" key="1"/>
<evidence type="ECO:0000255" key="2">
    <source>
        <dbReference type="HAMAP-Rule" id="MF_00514"/>
    </source>
</evidence>
<evidence type="ECO:0000256" key="3">
    <source>
        <dbReference type="SAM" id="MobiDB-lite"/>
    </source>
</evidence>
<evidence type="ECO:0000305" key="4"/>